<keyword id="KW-0106">Calcium</keyword>
<keyword id="KW-0449">Lipoprotein</keyword>
<keyword id="KW-0479">Metal-binding</keyword>
<keyword id="KW-0496">Mitochondrion</keyword>
<keyword id="KW-0519">Myristate</keyword>
<keyword id="KW-1267">Proteomics identification</keyword>
<keyword id="KW-1185">Reference proteome</keyword>
<keyword id="KW-0677">Repeat</keyword>
<sequence length="170" mass="19533">MGNEASYPAEMCSHFDNDEIKRLGRRFKKLDLDKSGSLSVEEFMSLPELRHNPLVRRVIDVFDTDGDGEVDFKEFILGTSQFSVKGDEEQKLRFAFSIYDMDKDGYISNGELFQVLKMMVGNNLTDWQLQQLVDKTIIILDKDGDGKISFEEFSAVVRDLEIHKKLVLIV</sequence>
<protein>
    <recommendedName>
        <fullName>Calcineurin subunit B type 2</fullName>
    </recommendedName>
    <alternativeName>
        <fullName>Calcineurin B-like protein</fullName>
        <shortName>CBLP</shortName>
    </alternativeName>
    <alternativeName>
        <fullName>Calcineurin BII</fullName>
        <shortName>CNBII</shortName>
    </alternativeName>
    <alternativeName>
        <fullName>PPP3R1-like</fullName>
    </alternativeName>
    <alternativeName>
        <fullName>Protein phosphatase 2B regulatory subunit 2</fullName>
    </alternativeName>
    <alternativeName>
        <fullName>Protein phosphatase 3 regulatory subunit B beta isoform</fullName>
    </alternativeName>
</protein>
<organism>
    <name type="scientific">Homo sapiens</name>
    <name type="common">Human</name>
    <dbReference type="NCBI Taxonomy" id="9606"/>
    <lineage>
        <taxon>Eukaryota</taxon>
        <taxon>Metazoa</taxon>
        <taxon>Chordata</taxon>
        <taxon>Craniata</taxon>
        <taxon>Vertebrata</taxon>
        <taxon>Euteleostomi</taxon>
        <taxon>Mammalia</taxon>
        <taxon>Eutheria</taxon>
        <taxon>Euarchontoglires</taxon>
        <taxon>Primates</taxon>
        <taxon>Haplorrhini</taxon>
        <taxon>Catarrhini</taxon>
        <taxon>Hominidae</taxon>
        <taxon>Homo</taxon>
    </lineage>
</organism>
<gene>
    <name type="primary">PPP3R2</name>
    <name type="synonym">CBLP</name>
    <name type="synonym">PPP3RL</name>
</gene>
<proteinExistence type="evidence at protein level"/>
<reference key="1">
    <citation type="journal article" date="2005" name="Mol. Biol. Rep.">
        <title>Characterization of a human regulatory subunit of protein phosphatase 3 gene (PPP3RL) expressed specifically in testis.</title>
        <authorList>
            <person name="Liu L."/>
            <person name="Zhang J."/>
            <person name="Yuan J."/>
            <person name="Dang Y."/>
            <person name="Yang C."/>
            <person name="Chen X."/>
            <person name="Xu J."/>
            <person name="Yu L."/>
        </authorList>
    </citation>
    <scope>NUCLEOTIDE SEQUENCE [MRNA]</scope>
    <scope>TISSUE SPECIFICITY</scope>
    <source>
        <tissue>Testis</tissue>
    </source>
</reference>
<reference key="2">
    <citation type="submission" date="2001-07" db="EMBL/GenBank/DDBJ databases">
        <title>cDNA cloning of a novel calcineurin B-like protein (CBLP).</title>
        <authorList>
            <person name="Guo J.H."/>
            <person name="She X.Y."/>
            <person name="Dai F.Y."/>
            <person name="Yu L."/>
        </authorList>
    </citation>
    <scope>NUCLEOTIDE SEQUENCE [LARGE SCALE MRNA]</scope>
</reference>
<reference key="3">
    <citation type="submission" date="2001-12" db="EMBL/GenBank/DDBJ databases">
        <title>Cloning of a novel human cDNA, CNBII, whose product shows significant homology to calcineurin B.</title>
        <authorList>
            <person name="Tu Q."/>
            <person name="Yu L."/>
            <person name="Bi A."/>
            <person name="Zhang H."/>
            <person name="He W."/>
            <person name="Zhao S."/>
        </authorList>
    </citation>
    <scope>NUCLEOTIDE SEQUENCE [MRNA]</scope>
</reference>
<reference key="4">
    <citation type="journal article" date="2004" name="Nat. Genet.">
        <title>Complete sequencing and characterization of 21,243 full-length human cDNAs.</title>
        <authorList>
            <person name="Ota T."/>
            <person name="Suzuki Y."/>
            <person name="Nishikawa T."/>
            <person name="Otsuki T."/>
            <person name="Sugiyama T."/>
            <person name="Irie R."/>
            <person name="Wakamatsu A."/>
            <person name="Hayashi K."/>
            <person name="Sato H."/>
            <person name="Nagai K."/>
            <person name="Kimura K."/>
            <person name="Makita H."/>
            <person name="Sekine M."/>
            <person name="Obayashi M."/>
            <person name="Nishi T."/>
            <person name="Shibahara T."/>
            <person name="Tanaka T."/>
            <person name="Ishii S."/>
            <person name="Yamamoto J."/>
            <person name="Saito K."/>
            <person name="Kawai Y."/>
            <person name="Isono Y."/>
            <person name="Nakamura Y."/>
            <person name="Nagahari K."/>
            <person name="Murakami K."/>
            <person name="Yasuda T."/>
            <person name="Iwayanagi T."/>
            <person name="Wagatsuma M."/>
            <person name="Shiratori A."/>
            <person name="Sudo H."/>
            <person name="Hosoiri T."/>
            <person name="Kaku Y."/>
            <person name="Kodaira H."/>
            <person name="Kondo H."/>
            <person name="Sugawara M."/>
            <person name="Takahashi M."/>
            <person name="Kanda K."/>
            <person name="Yokoi T."/>
            <person name="Furuya T."/>
            <person name="Kikkawa E."/>
            <person name="Omura Y."/>
            <person name="Abe K."/>
            <person name="Kamihara K."/>
            <person name="Katsuta N."/>
            <person name="Sato K."/>
            <person name="Tanikawa M."/>
            <person name="Yamazaki M."/>
            <person name="Ninomiya K."/>
            <person name="Ishibashi T."/>
            <person name="Yamashita H."/>
            <person name="Murakawa K."/>
            <person name="Fujimori K."/>
            <person name="Tanai H."/>
            <person name="Kimata M."/>
            <person name="Watanabe M."/>
            <person name="Hiraoka S."/>
            <person name="Chiba Y."/>
            <person name="Ishida S."/>
            <person name="Ono Y."/>
            <person name="Takiguchi S."/>
            <person name="Watanabe S."/>
            <person name="Yosida M."/>
            <person name="Hotuta T."/>
            <person name="Kusano J."/>
            <person name="Kanehori K."/>
            <person name="Takahashi-Fujii A."/>
            <person name="Hara H."/>
            <person name="Tanase T.-O."/>
            <person name="Nomura Y."/>
            <person name="Togiya S."/>
            <person name="Komai F."/>
            <person name="Hara R."/>
            <person name="Takeuchi K."/>
            <person name="Arita M."/>
            <person name="Imose N."/>
            <person name="Musashino K."/>
            <person name="Yuuki H."/>
            <person name="Oshima A."/>
            <person name="Sasaki N."/>
            <person name="Aotsuka S."/>
            <person name="Yoshikawa Y."/>
            <person name="Matsunawa H."/>
            <person name="Ichihara T."/>
            <person name="Shiohata N."/>
            <person name="Sano S."/>
            <person name="Moriya S."/>
            <person name="Momiyama H."/>
            <person name="Satoh N."/>
            <person name="Takami S."/>
            <person name="Terashima Y."/>
            <person name="Suzuki O."/>
            <person name="Nakagawa S."/>
            <person name="Senoh A."/>
            <person name="Mizoguchi H."/>
            <person name="Goto Y."/>
            <person name="Shimizu F."/>
            <person name="Wakebe H."/>
            <person name="Hishigaki H."/>
            <person name="Watanabe T."/>
            <person name="Sugiyama A."/>
            <person name="Takemoto M."/>
            <person name="Kawakami B."/>
            <person name="Yamazaki M."/>
            <person name="Watanabe K."/>
            <person name="Kumagai A."/>
            <person name="Itakura S."/>
            <person name="Fukuzumi Y."/>
            <person name="Fujimori Y."/>
            <person name="Komiyama M."/>
            <person name="Tashiro H."/>
            <person name="Tanigami A."/>
            <person name="Fujiwara T."/>
            <person name="Ono T."/>
            <person name="Yamada K."/>
            <person name="Fujii Y."/>
            <person name="Ozaki K."/>
            <person name="Hirao M."/>
            <person name="Ohmori Y."/>
            <person name="Kawabata A."/>
            <person name="Hikiji T."/>
            <person name="Kobatake N."/>
            <person name="Inagaki H."/>
            <person name="Ikema Y."/>
            <person name="Okamoto S."/>
            <person name="Okitani R."/>
            <person name="Kawakami T."/>
            <person name="Noguchi S."/>
            <person name="Itoh T."/>
            <person name="Shigeta K."/>
            <person name="Senba T."/>
            <person name="Matsumura K."/>
            <person name="Nakajima Y."/>
            <person name="Mizuno T."/>
            <person name="Morinaga M."/>
            <person name="Sasaki M."/>
            <person name="Togashi T."/>
            <person name="Oyama M."/>
            <person name="Hata H."/>
            <person name="Watanabe M."/>
            <person name="Komatsu T."/>
            <person name="Mizushima-Sugano J."/>
            <person name="Satoh T."/>
            <person name="Shirai Y."/>
            <person name="Takahashi Y."/>
            <person name="Nakagawa K."/>
            <person name="Okumura K."/>
            <person name="Nagase T."/>
            <person name="Nomura N."/>
            <person name="Kikuchi H."/>
            <person name="Masuho Y."/>
            <person name="Yamashita R."/>
            <person name="Nakai K."/>
            <person name="Yada T."/>
            <person name="Nakamura Y."/>
            <person name="Ohara O."/>
            <person name="Isogai T."/>
            <person name="Sugano S."/>
        </authorList>
    </citation>
    <scope>NUCLEOTIDE SEQUENCE [LARGE SCALE MRNA]</scope>
    <source>
        <tissue>Testis</tissue>
    </source>
</reference>
<reference key="5">
    <citation type="journal article" date="2004" name="Nature">
        <title>DNA sequence and analysis of human chromosome 9.</title>
        <authorList>
            <person name="Humphray S.J."/>
            <person name="Oliver K."/>
            <person name="Hunt A.R."/>
            <person name="Plumb R.W."/>
            <person name="Loveland J.E."/>
            <person name="Howe K.L."/>
            <person name="Andrews T.D."/>
            <person name="Searle S."/>
            <person name="Hunt S.E."/>
            <person name="Scott C.E."/>
            <person name="Jones M.C."/>
            <person name="Ainscough R."/>
            <person name="Almeida J.P."/>
            <person name="Ambrose K.D."/>
            <person name="Ashwell R.I.S."/>
            <person name="Babbage A.K."/>
            <person name="Babbage S."/>
            <person name="Bagguley C.L."/>
            <person name="Bailey J."/>
            <person name="Banerjee R."/>
            <person name="Barker D.J."/>
            <person name="Barlow K.F."/>
            <person name="Bates K."/>
            <person name="Beasley H."/>
            <person name="Beasley O."/>
            <person name="Bird C.P."/>
            <person name="Bray-Allen S."/>
            <person name="Brown A.J."/>
            <person name="Brown J.Y."/>
            <person name="Burford D."/>
            <person name="Burrill W."/>
            <person name="Burton J."/>
            <person name="Carder C."/>
            <person name="Carter N.P."/>
            <person name="Chapman J.C."/>
            <person name="Chen Y."/>
            <person name="Clarke G."/>
            <person name="Clark S.Y."/>
            <person name="Clee C.M."/>
            <person name="Clegg S."/>
            <person name="Collier R.E."/>
            <person name="Corby N."/>
            <person name="Crosier M."/>
            <person name="Cummings A.T."/>
            <person name="Davies J."/>
            <person name="Dhami P."/>
            <person name="Dunn M."/>
            <person name="Dutta I."/>
            <person name="Dyer L.W."/>
            <person name="Earthrowl M.E."/>
            <person name="Faulkner L."/>
            <person name="Fleming C.J."/>
            <person name="Frankish A."/>
            <person name="Frankland J.A."/>
            <person name="French L."/>
            <person name="Fricker D.G."/>
            <person name="Garner P."/>
            <person name="Garnett J."/>
            <person name="Ghori J."/>
            <person name="Gilbert J.G.R."/>
            <person name="Glison C."/>
            <person name="Grafham D.V."/>
            <person name="Gribble S."/>
            <person name="Griffiths C."/>
            <person name="Griffiths-Jones S."/>
            <person name="Grocock R."/>
            <person name="Guy J."/>
            <person name="Hall R.E."/>
            <person name="Hammond S."/>
            <person name="Harley J.L."/>
            <person name="Harrison E.S.I."/>
            <person name="Hart E.A."/>
            <person name="Heath P.D."/>
            <person name="Henderson C.D."/>
            <person name="Hopkins B.L."/>
            <person name="Howard P.J."/>
            <person name="Howden P.J."/>
            <person name="Huckle E."/>
            <person name="Johnson C."/>
            <person name="Johnson D."/>
            <person name="Joy A.A."/>
            <person name="Kay M."/>
            <person name="Keenan S."/>
            <person name="Kershaw J.K."/>
            <person name="Kimberley A.M."/>
            <person name="King A."/>
            <person name="Knights A."/>
            <person name="Laird G.K."/>
            <person name="Langford C."/>
            <person name="Lawlor S."/>
            <person name="Leongamornlert D.A."/>
            <person name="Leversha M."/>
            <person name="Lloyd C."/>
            <person name="Lloyd D.M."/>
            <person name="Lovell J."/>
            <person name="Martin S."/>
            <person name="Mashreghi-Mohammadi M."/>
            <person name="Matthews L."/>
            <person name="McLaren S."/>
            <person name="McLay K.E."/>
            <person name="McMurray A."/>
            <person name="Milne S."/>
            <person name="Nickerson T."/>
            <person name="Nisbett J."/>
            <person name="Nordsiek G."/>
            <person name="Pearce A.V."/>
            <person name="Peck A.I."/>
            <person name="Porter K.M."/>
            <person name="Pandian R."/>
            <person name="Pelan S."/>
            <person name="Phillimore B."/>
            <person name="Povey S."/>
            <person name="Ramsey Y."/>
            <person name="Rand V."/>
            <person name="Scharfe M."/>
            <person name="Sehra H.K."/>
            <person name="Shownkeen R."/>
            <person name="Sims S.K."/>
            <person name="Skuce C.D."/>
            <person name="Smith M."/>
            <person name="Steward C.A."/>
            <person name="Swarbreck D."/>
            <person name="Sycamore N."/>
            <person name="Tester J."/>
            <person name="Thorpe A."/>
            <person name="Tracey A."/>
            <person name="Tromans A."/>
            <person name="Thomas D.W."/>
            <person name="Wall M."/>
            <person name="Wallis J.M."/>
            <person name="West A.P."/>
            <person name="Whitehead S.L."/>
            <person name="Willey D.L."/>
            <person name="Williams S.A."/>
            <person name="Wilming L."/>
            <person name="Wray P.W."/>
            <person name="Young L."/>
            <person name="Ashurst J.L."/>
            <person name="Coulson A."/>
            <person name="Blocker H."/>
            <person name="Durbin R.M."/>
            <person name="Sulston J.E."/>
            <person name="Hubbard T."/>
            <person name="Jackson M.J."/>
            <person name="Bentley D.R."/>
            <person name="Beck S."/>
            <person name="Rogers J."/>
            <person name="Dunham I."/>
        </authorList>
    </citation>
    <scope>NUCLEOTIDE SEQUENCE [LARGE SCALE GENOMIC DNA]</scope>
</reference>
<reference key="6">
    <citation type="submission" date="2005-07" db="EMBL/GenBank/DDBJ databases">
        <authorList>
            <person name="Mural R.J."/>
            <person name="Istrail S."/>
            <person name="Sutton G.G."/>
            <person name="Florea L."/>
            <person name="Halpern A.L."/>
            <person name="Mobarry C.M."/>
            <person name="Lippert R."/>
            <person name="Walenz B."/>
            <person name="Shatkay H."/>
            <person name="Dew I."/>
            <person name="Miller J.R."/>
            <person name="Flanigan M.J."/>
            <person name="Edwards N.J."/>
            <person name="Bolanos R."/>
            <person name="Fasulo D."/>
            <person name="Halldorsson B.V."/>
            <person name="Hannenhalli S."/>
            <person name="Turner R."/>
            <person name="Yooseph S."/>
            <person name="Lu F."/>
            <person name="Nusskern D.R."/>
            <person name="Shue B.C."/>
            <person name="Zheng X.H."/>
            <person name="Zhong F."/>
            <person name="Delcher A.L."/>
            <person name="Huson D.H."/>
            <person name="Kravitz S.A."/>
            <person name="Mouchard L."/>
            <person name="Reinert K."/>
            <person name="Remington K.A."/>
            <person name="Clark A.G."/>
            <person name="Waterman M.S."/>
            <person name="Eichler E.E."/>
            <person name="Adams M.D."/>
            <person name="Hunkapiller M.W."/>
            <person name="Myers E.W."/>
            <person name="Venter J.C."/>
        </authorList>
    </citation>
    <scope>NUCLEOTIDE SEQUENCE [LARGE SCALE GENOMIC DNA]</scope>
</reference>
<reference key="7">
    <citation type="journal article" date="2004" name="Genome Res.">
        <title>The status, quality, and expansion of the NIH full-length cDNA project: the Mammalian Gene Collection (MGC).</title>
        <authorList>
            <consortium name="The MGC Project Team"/>
        </authorList>
    </citation>
    <scope>NUCLEOTIDE SEQUENCE [LARGE SCALE MRNA]</scope>
    <source>
        <tissue>Testis</tissue>
    </source>
</reference>
<reference key="8">
    <citation type="journal article" date="2021" name="Proc. Natl. Acad. Sci. U.S.A.">
        <title>SPATA33 localizes calcineurin to the mitochondria and regulates sperm motility in mice.</title>
        <authorList>
            <person name="Miyata H."/>
            <person name="Oura S."/>
            <person name="Morohoshi A."/>
            <person name="Shimada K."/>
            <person name="Mashiko D."/>
            <person name="Oyama Y."/>
            <person name="Kaneda Y."/>
            <person name="Matsumura T."/>
            <person name="Abbasi F."/>
            <person name="Ikawa M."/>
        </authorList>
    </citation>
    <scope>INTERACTION WITH SPATA33</scope>
</reference>
<name>CANB2_HUMAN</name>
<feature type="initiator methionine" description="Removed">
    <location>
        <position position="1"/>
    </location>
</feature>
<feature type="chain" id="PRO_0000073499" description="Calcineurin subunit B type 2">
    <location>
        <begin position="2"/>
        <end position="170"/>
    </location>
</feature>
<feature type="domain" description="EF-hand 1" evidence="3">
    <location>
        <begin position="18"/>
        <end position="46"/>
    </location>
</feature>
<feature type="domain" description="EF-hand 2" evidence="3">
    <location>
        <begin position="50"/>
        <end position="85"/>
    </location>
</feature>
<feature type="domain" description="EF-hand 3" evidence="3">
    <location>
        <begin position="87"/>
        <end position="122"/>
    </location>
</feature>
<feature type="domain" description="EF-hand 4" evidence="3">
    <location>
        <begin position="128"/>
        <end position="163"/>
    </location>
</feature>
<feature type="region of interest" description="Calcineurin A binding" evidence="1">
    <location>
        <begin position="131"/>
        <end position="136"/>
    </location>
</feature>
<feature type="binding site" evidence="3">
    <location>
        <position position="31"/>
    </location>
    <ligand>
        <name>Ca(2+)</name>
        <dbReference type="ChEBI" id="CHEBI:29108"/>
        <label>1</label>
    </ligand>
</feature>
<feature type="binding site" evidence="3">
    <location>
        <position position="33"/>
    </location>
    <ligand>
        <name>Ca(2+)</name>
        <dbReference type="ChEBI" id="CHEBI:29108"/>
        <label>1</label>
    </ligand>
</feature>
<feature type="binding site" evidence="3">
    <location>
        <position position="35"/>
    </location>
    <ligand>
        <name>Ca(2+)</name>
        <dbReference type="ChEBI" id="CHEBI:29108"/>
        <label>1</label>
    </ligand>
</feature>
<feature type="binding site" evidence="3">
    <location>
        <position position="37"/>
    </location>
    <ligand>
        <name>Ca(2+)</name>
        <dbReference type="ChEBI" id="CHEBI:29108"/>
        <label>1</label>
    </ligand>
</feature>
<feature type="binding site" evidence="3">
    <location>
        <position position="42"/>
    </location>
    <ligand>
        <name>Ca(2+)</name>
        <dbReference type="ChEBI" id="CHEBI:29108"/>
        <label>1</label>
    </ligand>
</feature>
<feature type="binding site" evidence="3">
    <location>
        <position position="63"/>
    </location>
    <ligand>
        <name>Ca(2+)</name>
        <dbReference type="ChEBI" id="CHEBI:29108"/>
        <label>2</label>
    </ligand>
</feature>
<feature type="binding site" evidence="3">
    <location>
        <position position="65"/>
    </location>
    <ligand>
        <name>Ca(2+)</name>
        <dbReference type="ChEBI" id="CHEBI:29108"/>
        <label>2</label>
    </ligand>
</feature>
<feature type="binding site" evidence="3">
    <location>
        <position position="67"/>
    </location>
    <ligand>
        <name>Ca(2+)</name>
        <dbReference type="ChEBI" id="CHEBI:29108"/>
        <label>2</label>
    </ligand>
</feature>
<feature type="binding site" evidence="3">
    <location>
        <position position="69"/>
    </location>
    <ligand>
        <name>Ca(2+)</name>
        <dbReference type="ChEBI" id="CHEBI:29108"/>
        <label>2</label>
    </ligand>
</feature>
<feature type="binding site" evidence="3">
    <location>
        <position position="74"/>
    </location>
    <ligand>
        <name>Ca(2+)</name>
        <dbReference type="ChEBI" id="CHEBI:29108"/>
        <label>2</label>
    </ligand>
</feature>
<feature type="binding site" evidence="3">
    <location>
        <position position="100"/>
    </location>
    <ligand>
        <name>Ca(2+)</name>
        <dbReference type="ChEBI" id="CHEBI:29108"/>
        <label>3</label>
    </ligand>
</feature>
<feature type="binding site" evidence="3">
    <location>
        <position position="102"/>
    </location>
    <ligand>
        <name>Ca(2+)</name>
        <dbReference type="ChEBI" id="CHEBI:29108"/>
        <label>3</label>
    </ligand>
</feature>
<feature type="binding site" evidence="3">
    <location>
        <position position="104"/>
    </location>
    <ligand>
        <name>Ca(2+)</name>
        <dbReference type="ChEBI" id="CHEBI:29108"/>
        <label>3</label>
    </ligand>
</feature>
<feature type="binding site" evidence="3">
    <location>
        <position position="106"/>
    </location>
    <ligand>
        <name>Ca(2+)</name>
        <dbReference type="ChEBI" id="CHEBI:29108"/>
        <label>3</label>
    </ligand>
</feature>
<feature type="binding site" evidence="3">
    <location>
        <position position="111"/>
    </location>
    <ligand>
        <name>Ca(2+)</name>
        <dbReference type="ChEBI" id="CHEBI:29108"/>
        <label>3</label>
    </ligand>
</feature>
<feature type="binding site" evidence="3">
    <location>
        <position position="141"/>
    </location>
    <ligand>
        <name>Ca(2+)</name>
        <dbReference type="ChEBI" id="CHEBI:29108"/>
        <label>4</label>
    </ligand>
</feature>
<feature type="binding site" evidence="3">
    <location>
        <position position="143"/>
    </location>
    <ligand>
        <name>Ca(2+)</name>
        <dbReference type="ChEBI" id="CHEBI:29108"/>
        <label>4</label>
    </ligand>
</feature>
<feature type="binding site" evidence="3">
    <location>
        <position position="145"/>
    </location>
    <ligand>
        <name>Ca(2+)</name>
        <dbReference type="ChEBI" id="CHEBI:29108"/>
        <label>4</label>
    </ligand>
</feature>
<feature type="binding site" evidence="3">
    <location>
        <position position="147"/>
    </location>
    <ligand>
        <name>Ca(2+)</name>
        <dbReference type="ChEBI" id="CHEBI:29108"/>
        <label>4</label>
    </ligand>
</feature>
<feature type="binding site" evidence="3">
    <location>
        <position position="152"/>
    </location>
    <ligand>
        <name>Ca(2+)</name>
        <dbReference type="ChEBI" id="CHEBI:29108"/>
        <label>4</label>
    </ligand>
</feature>
<feature type="site" description="Interaction with PxVP motif in substrates of the catalytic subunit" evidence="1">
    <location>
        <position position="118"/>
    </location>
</feature>
<feature type="site" description="Interaction with PxVP motif in substrates of the catalytic subunit" evidence="1">
    <location>
        <position position="122"/>
    </location>
</feature>
<feature type="lipid moiety-binding region" description="N-myristoyl glycine" evidence="1">
    <location>
        <position position="2"/>
    </location>
</feature>
<feature type="sequence conflict" description="In Ref. 3; AAL40395." evidence="6" ref="3">
    <original>D</original>
    <variation>N</variation>
    <location>
        <position position="16"/>
    </location>
</feature>
<evidence type="ECO:0000250" key="1">
    <source>
        <dbReference type="UniProtKB" id="P63098"/>
    </source>
</evidence>
<evidence type="ECO:0000250" key="2">
    <source>
        <dbReference type="UniProtKB" id="Q63811"/>
    </source>
</evidence>
<evidence type="ECO:0000255" key="3">
    <source>
        <dbReference type="PROSITE-ProRule" id="PRU00448"/>
    </source>
</evidence>
<evidence type="ECO:0000269" key="4">
    <source>
    </source>
</evidence>
<evidence type="ECO:0000269" key="5">
    <source>
    </source>
</evidence>
<evidence type="ECO:0000305" key="6"/>
<comment type="function">
    <text evidence="1">Regulatory subunit of calcineurin, a calcium-dependent, calmodulin stimulated protein phosphatase. Confers calcium sensitivity.</text>
</comment>
<comment type="subunit">
    <text evidence="1 5">Forms a complex composed of a calmodulin-dependent catalytic subunit (also known as calcineurin A) and a regulatory Ca(2+)-binding subunit (also known as calcineurin B). There are three catalytic subunits, each encoded by a separate gene (PPP3CA, PPP3CB, and PPP3CC) and two regulatory subunits which are also encoded by separate genes (PPP3R1 and PPP3R2) (By similarity). Interacts with SPATA33 (via PQIIIT motif) (PubMed:34446558).</text>
</comment>
<comment type="interaction">
    <interactant intactId="EBI-3906025">
        <id>Q96LZ3</id>
    </interactant>
    <interactant intactId="EBI-717422">
        <id>Q12800</id>
        <label>TFCP2</label>
    </interactant>
    <organismsDiffer>false</organismsDiffer>
    <experiments>3</experiments>
</comment>
<comment type="subcellular location">
    <subcellularLocation>
        <location evidence="2">Mitochondrion</location>
    </subcellularLocation>
    <text evidence="2">Localizes in the mitochondria in a SPATA33-dependent manner.</text>
</comment>
<comment type="tissue specificity">
    <text evidence="4">Testis-specific.</text>
</comment>
<comment type="miscellaneous">
    <text evidence="1">This protein has four functional calcium-binding sites.</text>
</comment>
<comment type="similarity">
    <text evidence="6">Belongs to the calcineurin regulatory subunit family.</text>
</comment>
<comment type="sequence caution" evidence="6">
    <conflict type="erroneous initiation">
        <sequence resource="EMBL-CDS" id="AAH30595"/>
    </conflict>
    <text>Extended N-terminus.</text>
</comment>
<comment type="sequence caution" evidence="6">
    <conflict type="erroneous initiation">
        <sequence resource="EMBL-CDS" id="AAH66299"/>
    </conflict>
    <text>Extended N-terminus.</text>
</comment>
<comment type="sequence caution" evidence="6">
    <conflict type="erroneous initiation">
        <sequence resource="EMBL-CDS" id="AAP57772"/>
    </conflict>
    <text>Extended N-terminus.</text>
</comment>
<comment type="sequence caution" evidence="6">
    <conflict type="erroneous initiation">
        <sequence resource="EMBL-CDS" id="BAB71521"/>
    </conflict>
    <text>Extended N-terminus.</text>
</comment>
<comment type="sequence caution" evidence="6">
    <conflict type="erroneous initiation">
        <sequence resource="EMBL-CDS" id="EAW58961"/>
    </conflict>
    <text>Extended N-terminus.</text>
</comment>
<accession>Q96LZ3</accession>
<accession>Q5VTR4</accession>
<accession>Q7Z4V8</accession>
<accession>Q8WYJ4</accession>
<dbReference type="EMBL" id="AF145026">
    <property type="protein sequence ID" value="AAP97278.1"/>
    <property type="molecule type" value="mRNA"/>
</dbReference>
<dbReference type="EMBL" id="AF400667">
    <property type="protein sequence ID" value="AAP57772.1"/>
    <property type="status" value="ALT_INIT"/>
    <property type="molecule type" value="mRNA"/>
</dbReference>
<dbReference type="EMBL" id="AF085237">
    <property type="protein sequence ID" value="AAL40395.1"/>
    <property type="molecule type" value="mRNA"/>
</dbReference>
<dbReference type="EMBL" id="AK057524">
    <property type="protein sequence ID" value="BAB71521.1"/>
    <property type="status" value="ALT_INIT"/>
    <property type="molecule type" value="mRNA"/>
</dbReference>
<dbReference type="EMBL" id="AL591377">
    <property type="status" value="NOT_ANNOTATED_CDS"/>
    <property type="molecule type" value="Genomic_DNA"/>
</dbReference>
<dbReference type="EMBL" id="CH471105">
    <property type="protein sequence ID" value="EAW58961.1"/>
    <property type="status" value="ALT_INIT"/>
    <property type="molecule type" value="Genomic_DNA"/>
</dbReference>
<dbReference type="EMBL" id="BC030595">
    <property type="protein sequence ID" value="AAH30595.1"/>
    <property type="status" value="ALT_INIT"/>
    <property type="molecule type" value="mRNA"/>
</dbReference>
<dbReference type="EMBL" id="BC066299">
    <property type="protein sequence ID" value="AAH66299.1"/>
    <property type="status" value="ALT_INIT"/>
    <property type="molecule type" value="mRNA"/>
</dbReference>
<dbReference type="CCDS" id="CCDS6759.2"/>
<dbReference type="RefSeq" id="NP_671709.2">
    <property type="nucleotide sequence ID" value="NM_147180.4"/>
</dbReference>
<dbReference type="SMR" id="Q96LZ3"/>
<dbReference type="BioGRID" id="111527">
    <property type="interactions" value="31"/>
</dbReference>
<dbReference type="ComplexPortal" id="CPX-1002">
    <property type="entry name" value="Calcineurin-Calmodulin complex, beta-R2 variant"/>
</dbReference>
<dbReference type="ComplexPortal" id="CPX-1048">
    <property type="entry name" value="Calcineurin-Calmodulin complex, alpha-R2 variant"/>
</dbReference>
<dbReference type="ComplexPortal" id="CPX-1050">
    <property type="entry name" value="Calcineurin-Calmodulin complex, gamma-R2 variant"/>
</dbReference>
<dbReference type="ComplexPortal" id="CPX-1114">
    <property type="entry name" value="Calcineurin-Calmodulin-AKAP5 complex, alpha-R2 variant"/>
</dbReference>
<dbReference type="ComplexPortal" id="CPX-1116">
    <property type="entry name" value="Calcineurin-Calmodulin-AKAP5 complex, beta-R2 variant"/>
</dbReference>
<dbReference type="ComplexPortal" id="CPX-1118">
    <property type="entry name" value="Calcineurin-Calmodulin-AKAP5 complex, gamma-R2 variant"/>
</dbReference>
<dbReference type="FunCoup" id="Q96LZ3">
    <property type="interactions" value="1117"/>
</dbReference>
<dbReference type="IntAct" id="Q96LZ3">
    <property type="interactions" value="28"/>
</dbReference>
<dbReference type="MINT" id="Q96LZ3"/>
<dbReference type="STRING" id="9606.ENSP00000498330"/>
<dbReference type="DrugBank" id="DB00091">
    <property type="generic name" value="Cyclosporine"/>
</dbReference>
<dbReference type="DrugBank" id="DB11693">
    <property type="generic name" value="Voclosporin"/>
</dbReference>
<dbReference type="CarbonylDB" id="Q96LZ3"/>
<dbReference type="iPTMnet" id="Q96LZ3"/>
<dbReference type="PhosphoSitePlus" id="Q96LZ3"/>
<dbReference type="BioMuta" id="PPP3R2"/>
<dbReference type="DMDM" id="52000731"/>
<dbReference type="jPOST" id="Q96LZ3"/>
<dbReference type="MassIVE" id="Q96LZ3"/>
<dbReference type="PaxDb" id="9606-ENSP00000363939"/>
<dbReference type="PeptideAtlas" id="Q96LZ3"/>
<dbReference type="ProteomicsDB" id="77271"/>
<dbReference type="Antibodypedia" id="29196">
    <property type="antibodies" value="196 antibodies from 28 providers"/>
</dbReference>
<dbReference type="DNASU" id="5535"/>
<dbReference type="Ensembl" id="ENST00000374806.2">
    <property type="protein sequence ID" value="ENSP00000363939.2"/>
    <property type="gene ID" value="ENSG00000188386.8"/>
</dbReference>
<dbReference type="GeneID" id="5535"/>
<dbReference type="KEGG" id="hsa:5535"/>
<dbReference type="MANE-Select" id="ENST00000374806.2">
    <property type="protein sequence ID" value="ENSP00000363939.2"/>
    <property type="RefSeq nucleotide sequence ID" value="NM_147180.4"/>
    <property type="RefSeq protein sequence ID" value="NP_671709.2"/>
</dbReference>
<dbReference type="UCSC" id="uc004bbr.3">
    <property type="organism name" value="human"/>
</dbReference>
<dbReference type="AGR" id="HGNC:9318"/>
<dbReference type="CTD" id="5535"/>
<dbReference type="DisGeNET" id="5535"/>
<dbReference type="GeneCards" id="PPP3R2"/>
<dbReference type="HGNC" id="HGNC:9318">
    <property type="gene designation" value="PPP3R2"/>
</dbReference>
<dbReference type="HPA" id="ENSG00000188386">
    <property type="expression patterns" value="Tissue enriched (testis)"/>
</dbReference>
<dbReference type="MIM" id="613821">
    <property type="type" value="gene"/>
</dbReference>
<dbReference type="neXtProt" id="NX_Q96LZ3"/>
<dbReference type="OpenTargets" id="ENSG00000188386"/>
<dbReference type="PharmGKB" id="PA33682"/>
<dbReference type="VEuPathDB" id="HostDB:ENSG00000188386"/>
<dbReference type="eggNOG" id="KOG0034">
    <property type="taxonomic scope" value="Eukaryota"/>
</dbReference>
<dbReference type="GeneTree" id="ENSGT00940000165130"/>
<dbReference type="HOGENOM" id="CLU_061288_10_1_1"/>
<dbReference type="InParanoid" id="Q96LZ3"/>
<dbReference type="OMA" id="FHCNDAG"/>
<dbReference type="OrthoDB" id="191686at2759"/>
<dbReference type="PAN-GO" id="Q96LZ3">
    <property type="GO annotations" value="5 GO annotations based on evolutionary models"/>
</dbReference>
<dbReference type="PhylomeDB" id="Q96LZ3"/>
<dbReference type="TreeFam" id="TF105558"/>
<dbReference type="BRENDA" id="3.1.3.16">
    <property type="organism ID" value="2681"/>
</dbReference>
<dbReference type="PathwayCommons" id="Q96LZ3"/>
<dbReference type="SignaLink" id="Q96LZ3"/>
<dbReference type="BioGRID-ORCS" id="5535">
    <property type="hits" value="11 hits in 1147 CRISPR screens"/>
</dbReference>
<dbReference type="GeneWiki" id="PPP3R2"/>
<dbReference type="GenomeRNAi" id="5535"/>
<dbReference type="Pharos" id="Q96LZ3">
    <property type="development level" value="Tbio"/>
</dbReference>
<dbReference type="PRO" id="PR:Q96LZ3"/>
<dbReference type="Proteomes" id="UP000005640">
    <property type="component" value="Chromosome 9"/>
</dbReference>
<dbReference type="RNAct" id="Q96LZ3">
    <property type="molecule type" value="protein"/>
</dbReference>
<dbReference type="Bgee" id="ENSG00000188386">
    <property type="expression patterns" value="Expressed in adult organism and 33 other cell types or tissues"/>
</dbReference>
<dbReference type="ExpressionAtlas" id="Q96LZ3">
    <property type="expression patterns" value="baseline and differential"/>
</dbReference>
<dbReference type="GO" id="GO:0005955">
    <property type="term" value="C:calcineurin complex"/>
    <property type="evidence" value="ECO:0000318"/>
    <property type="project" value="GO_Central"/>
</dbReference>
<dbReference type="GO" id="GO:0005829">
    <property type="term" value="C:cytosol"/>
    <property type="evidence" value="ECO:0000303"/>
    <property type="project" value="ComplexPortal"/>
</dbReference>
<dbReference type="GO" id="GO:0005739">
    <property type="term" value="C:mitochondrion"/>
    <property type="evidence" value="ECO:0007669"/>
    <property type="project" value="UniProtKB-SubCell"/>
</dbReference>
<dbReference type="GO" id="GO:0008287">
    <property type="term" value="C:protein serine/threonine phosphatase complex"/>
    <property type="evidence" value="ECO:0000303"/>
    <property type="project" value="ComplexPortal"/>
</dbReference>
<dbReference type="GO" id="GO:0097226">
    <property type="term" value="C:sperm mitochondrial sheath"/>
    <property type="evidence" value="ECO:0007669"/>
    <property type="project" value="Ensembl"/>
</dbReference>
<dbReference type="GO" id="GO:0005509">
    <property type="term" value="F:calcium ion binding"/>
    <property type="evidence" value="ECO:0007669"/>
    <property type="project" value="InterPro"/>
</dbReference>
<dbReference type="GO" id="GO:0008597">
    <property type="term" value="F:calcium-dependent protein serine/threonine phosphatase regulator activity"/>
    <property type="evidence" value="ECO:0000314"/>
    <property type="project" value="MGI"/>
</dbReference>
<dbReference type="GO" id="GO:0019902">
    <property type="term" value="F:phosphatase binding"/>
    <property type="evidence" value="ECO:0000318"/>
    <property type="project" value="GO_Central"/>
</dbReference>
<dbReference type="GO" id="GO:0097720">
    <property type="term" value="P:calcineurin-mediated signaling"/>
    <property type="evidence" value="ECO:0000318"/>
    <property type="project" value="GO_Central"/>
</dbReference>
<dbReference type="GO" id="GO:1905949">
    <property type="term" value="P:negative regulation of calcium ion import across plasma membrane"/>
    <property type="evidence" value="ECO:0000303"/>
    <property type="project" value="ComplexPortal"/>
</dbReference>
<dbReference type="GO" id="GO:0007341">
    <property type="term" value="P:penetration of zona pellucida"/>
    <property type="evidence" value="ECO:0007669"/>
    <property type="project" value="Ensembl"/>
</dbReference>
<dbReference type="GO" id="GO:0070886">
    <property type="term" value="P:positive regulation of calcineurin-NFAT signaling cascade"/>
    <property type="evidence" value="ECO:0000303"/>
    <property type="project" value="ComplexPortal"/>
</dbReference>
<dbReference type="GO" id="GO:1905665">
    <property type="term" value="P:positive regulation of calcium ion import across plasma membrane"/>
    <property type="evidence" value="ECO:0000303"/>
    <property type="project" value="ComplexPortal"/>
</dbReference>
<dbReference type="CDD" id="cd00051">
    <property type="entry name" value="EFh"/>
    <property type="match status" value="1"/>
</dbReference>
<dbReference type="FunFam" id="1.10.238.10:FF:000047">
    <property type="entry name" value="Calcineurin subunit B type 1"/>
    <property type="match status" value="1"/>
</dbReference>
<dbReference type="Gene3D" id="1.10.238.10">
    <property type="entry name" value="EF-hand"/>
    <property type="match status" value="1"/>
</dbReference>
<dbReference type="InterPro" id="IPR011992">
    <property type="entry name" value="EF-hand-dom_pair"/>
</dbReference>
<dbReference type="InterPro" id="IPR018247">
    <property type="entry name" value="EF_Hand_1_Ca_BS"/>
</dbReference>
<dbReference type="InterPro" id="IPR002048">
    <property type="entry name" value="EF_hand_dom"/>
</dbReference>
<dbReference type="PANTHER" id="PTHR45942">
    <property type="entry name" value="PROTEIN PHOSPATASE 3 REGULATORY SUBUNIT B ALPHA ISOFORM TYPE 1"/>
    <property type="match status" value="1"/>
</dbReference>
<dbReference type="Pfam" id="PF13499">
    <property type="entry name" value="EF-hand_7"/>
    <property type="match status" value="2"/>
</dbReference>
<dbReference type="PRINTS" id="PR00450">
    <property type="entry name" value="RECOVERIN"/>
</dbReference>
<dbReference type="SMART" id="SM00054">
    <property type="entry name" value="EFh"/>
    <property type="match status" value="4"/>
</dbReference>
<dbReference type="SUPFAM" id="SSF47473">
    <property type="entry name" value="EF-hand"/>
    <property type="match status" value="1"/>
</dbReference>
<dbReference type="PROSITE" id="PS00018">
    <property type="entry name" value="EF_HAND_1"/>
    <property type="match status" value="4"/>
</dbReference>
<dbReference type="PROSITE" id="PS50222">
    <property type="entry name" value="EF_HAND_2"/>
    <property type="match status" value="4"/>
</dbReference>